<evidence type="ECO:0000269" key="1">
    <source>
    </source>
</evidence>
<evidence type="ECO:0000303" key="2">
    <source>
    </source>
</evidence>
<evidence type="ECO:0000305" key="3"/>
<comment type="subcellular location">
    <subcellularLocation>
        <location evidence="1">Secreted</location>
        <location evidence="1">Cell wall</location>
    </subcellularLocation>
</comment>
<reference evidence="3" key="1">
    <citation type="journal article" date="2009" name="J. Plant Physiol.">
        <title>Analysis of the soluble cell wall proteome of gymnosperms.</title>
        <authorList>
            <person name="Uzal E.N."/>
            <person name="Gomez-Ros L.V."/>
            <person name="Hernandez J.A."/>
            <person name="Pedreno M.A."/>
            <person name="Cuello J."/>
            <person name="Ros Barcelo A."/>
        </authorList>
    </citation>
    <scope>PROTEIN SEQUENCE</scope>
    <scope>SUBCELLULAR LOCATION</scope>
    <source>
        <tissue evidence="1">Callus</tissue>
    </source>
</reference>
<protein>
    <recommendedName>
        <fullName>Putative Na(+)/H(+) antiporter</fullName>
    </recommendedName>
</protein>
<sequence length="9" mass="949">FGVLAVTSR</sequence>
<keyword id="KW-0134">Cell wall</keyword>
<keyword id="KW-0903">Direct protein sequencing</keyword>
<keyword id="KW-0964">Secreted</keyword>
<dbReference type="GO" id="GO:0005576">
    <property type="term" value="C:extracellular region"/>
    <property type="evidence" value="ECO:0007669"/>
    <property type="project" value="UniProtKB-KW"/>
</dbReference>
<proteinExistence type="evidence at protein level"/>
<accession>P85361</accession>
<feature type="chain" id="PRO_0000315931" description="Putative Na(+)/H(+) antiporter">
    <location>
        <begin position="1" status="less than"/>
        <end position="9" status="greater than"/>
    </location>
</feature>
<feature type="unsure residue" description="F or M" evidence="1">
    <location>
        <position position="1"/>
    </location>
</feature>
<feature type="unsure residue" description="L or I" evidence="1">
    <location>
        <position position="4"/>
    </location>
</feature>
<feature type="non-terminal residue" evidence="2">
    <location>
        <position position="1"/>
    </location>
</feature>
<feature type="non-terminal residue" evidence="2">
    <location>
        <position position="9"/>
    </location>
</feature>
<organism>
    <name type="scientific">Cycas revoluta</name>
    <name type="common">Sago palm</name>
    <dbReference type="NCBI Taxonomy" id="3396"/>
    <lineage>
        <taxon>Eukaryota</taxon>
        <taxon>Viridiplantae</taxon>
        <taxon>Streptophyta</taxon>
        <taxon>Embryophyta</taxon>
        <taxon>Tracheophyta</taxon>
        <taxon>Spermatophyta</taxon>
        <taxon>Cycadidae</taxon>
        <taxon>Cycadales</taxon>
        <taxon>Cycadaceae</taxon>
        <taxon>Cycas</taxon>
    </lineage>
</organism>
<name>NAH_CYCRE</name>